<dbReference type="EC" id="3.6.5.4" evidence="1"/>
<dbReference type="EMBL" id="AE001439">
    <property type="protein sequence ID" value="AAD06275.1"/>
    <property type="molecule type" value="Genomic_DNA"/>
</dbReference>
<dbReference type="PIR" id="D71899">
    <property type="entry name" value="D71899"/>
</dbReference>
<dbReference type="RefSeq" id="WP_000481632.1">
    <property type="nucleotide sequence ID" value="NC_000921.1"/>
</dbReference>
<dbReference type="SMR" id="Q9ZL80"/>
<dbReference type="KEGG" id="hpj:jhp_0700"/>
<dbReference type="PATRIC" id="fig|85963.30.peg.278"/>
<dbReference type="eggNOG" id="COG0552">
    <property type="taxonomic scope" value="Bacteria"/>
</dbReference>
<dbReference type="Proteomes" id="UP000000804">
    <property type="component" value="Chromosome"/>
</dbReference>
<dbReference type="GO" id="GO:0005737">
    <property type="term" value="C:cytoplasm"/>
    <property type="evidence" value="ECO:0007669"/>
    <property type="project" value="UniProtKB-SubCell"/>
</dbReference>
<dbReference type="GO" id="GO:0005886">
    <property type="term" value="C:plasma membrane"/>
    <property type="evidence" value="ECO:0007669"/>
    <property type="project" value="UniProtKB-SubCell"/>
</dbReference>
<dbReference type="GO" id="GO:0005525">
    <property type="term" value="F:GTP binding"/>
    <property type="evidence" value="ECO:0007669"/>
    <property type="project" value="UniProtKB-UniRule"/>
</dbReference>
<dbReference type="GO" id="GO:0003924">
    <property type="term" value="F:GTPase activity"/>
    <property type="evidence" value="ECO:0007669"/>
    <property type="project" value="UniProtKB-UniRule"/>
</dbReference>
<dbReference type="GO" id="GO:0005047">
    <property type="term" value="F:signal recognition particle binding"/>
    <property type="evidence" value="ECO:0007669"/>
    <property type="project" value="TreeGrafter"/>
</dbReference>
<dbReference type="GO" id="GO:0006614">
    <property type="term" value="P:SRP-dependent cotranslational protein targeting to membrane"/>
    <property type="evidence" value="ECO:0007669"/>
    <property type="project" value="InterPro"/>
</dbReference>
<dbReference type="CDD" id="cd17874">
    <property type="entry name" value="FtsY"/>
    <property type="match status" value="1"/>
</dbReference>
<dbReference type="FunFam" id="3.40.50.300:FF:000053">
    <property type="entry name" value="Signal recognition particle receptor FtsY"/>
    <property type="match status" value="1"/>
</dbReference>
<dbReference type="Gene3D" id="3.40.50.300">
    <property type="entry name" value="P-loop containing nucleotide triphosphate hydrolases"/>
    <property type="match status" value="1"/>
</dbReference>
<dbReference type="Gene3D" id="1.20.120.140">
    <property type="entry name" value="Signal recognition particle SRP54, nucleotide-binding domain"/>
    <property type="match status" value="1"/>
</dbReference>
<dbReference type="HAMAP" id="MF_00920">
    <property type="entry name" value="FtsY"/>
    <property type="match status" value="1"/>
</dbReference>
<dbReference type="InterPro" id="IPR027417">
    <property type="entry name" value="P-loop_NTPase"/>
</dbReference>
<dbReference type="InterPro" id="IPR004390">
    <property type="entry name" value="SR_rcpt_FtsY"/>
</dbReference>
<dbReference type="InterPro" id="IPR000897">
    <property type="entry name" value="SRP54_GTPase_dom"/>
</dbReference>
<dbReference type="InterPro" id="IPR042101">
    <property type="entry name" value="SRP54_N_sf"/>
</dbReference>
<dbReference type="NCBIfam" id="TIGR00064">
    <property type="entry name" value="ftsY"/>
    <property type="match status" value="1"/>
</dbReference>
<dbReference type="PANTHER" id="PTHR43134">
    <property type="entry name" value="SIGNAL RECOGNITION PARTICLE RECEPTOR SUBUNIT ALPHA"/>
    <property type="match status" value="1"/>
</dbReference>
<dbReference type="PANTHER" id="PTHR43134:SF1">
    <property type="entry name" value="SIGNAL RECOGNITION PARTICLE RECEPTOR SUBUNIT ALPHA"/>
    <property type="match status" value="1"/>
</dbReference>
<dbReference type="Pfam" id="PF00448">
    <property type="entry name" value="SRP54"/>
    <property type="match status" value="1"/>
</dbReference>
<dbReference type="SMART" id="SM00962">
    <property type="entry name" value="SRP54"/>
    <property type="match status" value="1"/>
</dbReference>
<dbReference type="SUPFAM" id="SSF52540">
    <property type="entry name" value="P-loop containing nucleoside triphosphate hydrolases"/>
    <property type="match status" value="1"/>
</dbReference>
<dbReference type="PROSITE" id="PS00300">
    <property type="entry name" value="SRP54"/>
    <property type="match status" value="1"/>
</dbReference>
<sequence>MFNFFKKIVNKIKGEEVKEKKRESVPKEELEEILIGFDIQYDLIESLLKHLGDLITPKQLEVALLRFVRGESYYDKTRLKTITTKPLVHLIVGVNGAGKTTTIAKLAKLSLKQHKKALLGAGDTFRAAAVKQLQLWGEKLNVQVISAKEGSDPSSLAYNTIESAIAKNIDEVFIDTAGRLHNQTNLKNELSKIAHTCSKVLKDAPFYKFLILDGTQGSSGLTQAKIFHETLALDGVIMTKLDGTSKGGAILSVLYELKLPILYLGMGEKEDDLIAFDEERFIEDLVDAVFVEQ</sequence>
<reference key="1">
    <citation type="journal article" date="1999" name="Nature">
        <title>Genomic sequence comparison of two unrelated isolates of the human gastric pathogen Helicobacter pylori.</title>
        <authorList>
            <person name="Alm R.A."/>
            <person name="Ling L.-S.L."/>
            <person name="Moir D.T."/>
            <person name="King B.L."/>
            <person name="Brown E.D."/>
            <person name="Doig P.C."/>
            <person name="Smith D.R."/>
            <person name="Noonan B."/>
            <person name="Guild B.C."/>
            <person name="deJonge B.L."/>
            <person name="Carmel G."/>
            <person name="Tummino P.J."/>
            <person name="Caruso A."/>
            <person name="Uria-Nickelsen M."/>
            <person name="Mills D.M."/>
            <person name="Ives C."/>
            <person name="Gibson R."/>
            <person name="Merberg D."/>
            <person name="Mills S.D."/>
            <person name="Jiang Q."/>
            <person name="Taylor D.E."/>
            <person name="Vovis G.F."/>
            <person name="Trust T.J."/>
        </authorList>
    </citation>
    <scope>NUCLEOTIDE SEQUENCE [LARGE SCALE GENOMIC DNA]</scope>
    <source>
        <strain>J99 / ATCC 700824</strain>
    </source>
</reference>
<comment type="function">
    <text evidence="1">Involved in targeting and insertion of nascent membrane proteins into the cytoplasmic membrane. Acts as a receptor for the complex formed by the signal recognition particle (SRP) and the ribosome-nascent chain (RNC). Interaction with SRP-RNC leads to the transfer of the RNC complex to the Sec translocase for insertion into the membrane, the hydrolysis of GTP by both Ffh and FtsY, and the dissociation of the SRP-FtsY complex into the individual components.</text>
</comment>
<comment type="catalytic activity">
    <reaction evidence="1">
        <text>GTP + H2O = GDP + phosphate + H(+)</text>
        <dbReference type="Rhea" id="RHEA:19669"/>
        <dbReference type="ChEBI" id="CHEBI:15377"/>
        <dbReference type="ChEBI" id="CHEBI:15378"/>
        <dbReference type="ChEBI" id="CHEBI:37565"/>
        <dbReference type="ChEBI" id="CHEBI:43474"/>
        <dbReference type="ChEBI" id="CHEBI:58189"/>
        <dbReference type="EC" id="3.6.5.4"/>
    </reaction>
</comment>
<comment type="subunit">
    <text evidence="1">Part of the signal recognition particle protein translocation system, which is composed of SRP and FtsY. SRP is a ribonucleoprotein composed of Ffh and a 4.5S RNA molecule.</text>
</comment>
<comment type="subcellular location">
    <subcellularLocation>
        <location>Cell inner membrane</location>
        <topology>Peripheral membrane protein</topology>
        <orientation>Cytoplasmic side</orientation>
    </subcellularLocation>
    <subcellularLocation>
        <location evidence="1">Cytoplasm</location>
    </subcellularLocation>
</comment>
<comment type="similarity">
    <text evidence="1">Belongs to the GTP-binding SRP family. FtsY subfamily.</text>
</comment>
<gene>
    <name evidence="1" type="primary">ftsY</name>
    <name type="ordered locus">jhp_0700</name>
</gene>
<accession>Q9ZL80</accession>
<protein>
    <recommendedName>
        <fullName evidence="1">Signal recognition particle receptor FtsY</fullName>
        <shortName evidence="1">SRP receptor</shortName>
        <ecNumber evidence="1">3.6.5.4</ecNumber>
    </recommendedName>
</protein>
<feature type="chain" id="PRO_0000101134" description="Signal recognition particle receptor FtsY">
    <location>
        <begin position="1"/>
        <end position="293"/>
    </location>
</feature>
<feature type="binding site" evidence="1">
    <location>
        <begin position="93"/>
        <end position="100"/>
    </location>
    <ligand>
        <name>GTP</name>
        <dbReference type="ChEBI" id="CHEBI:37565"/>
    </ligand>
</feature>
<feature type="binding site" evidence="1">
    <location>
        <begin position="175"/>
        <end position="179"/>
    </location>
    <ligand>
        <name>GTP</name>
        <dbReference type="ChEBI" id="CHEBI:37565"/>
    </ligand>
</feature>
<feature type="binding site" evidence="1">
    <location>
        <begin position="239"/>
        <end position="242"/>
    </location>
    <ligand>
        <name>GTP</name>
        <dbReference type="ChEBI" id="CHEBI:37565"/>
    </ligand>
</feature>
<evidence type="ECO:0000255" key="1">
    <source>
        <dbReference type="HAMAP-Rule" id="MF_00920"/>
    </source>
</evidence>
<organism>
    <name type="scientific">Helicobacter pylori (strain J99 / ATCC 700824)</name>
    <name type="common">Campylobacter pylori J99</name>
    <dbReference type="NCBI Taxonomy" id="85963"/>
    <lineage>
        <taxon>Bacteria</taxon>
        <taxon>Pseudomonadati</taxon>
        <taxon>Campylobacterota</taxon>
        <taxon>Epsilonproteobacteria</taxon>
        <taxon>Campylobacterales</taxon>
        <taxon>Helicobacteraceae</taxon>
        <taxon>Helicobacter</taxon>
    </lineage>
</organism>
<keyword id="KW-0997">Cell inner membrane</keyword>
<keyword id="KW-1003">Cell membrane</keyword>
<keyword id="KW-0963">Cytoplasm</keyword>
<keyword id="KW-0342">GTP-binding</keyword>
<keyword id="KW-0378">Hydrolase</keyword>
<keyword id="KW-0472">Membrane</keyword>
<keyword id="KW-0547">Nucleotide-binding</keyword>
<keyword id="KW-0675">Receptor</keyword>
<proteinExistence type="inferred from homology"/>
<name>FTSY_HELPJ</name>